<comment type="function">
    <text evidence="1">Catalyzes the condensation of pantoate with beta-alanine in an ATP-dependent reaction via a pantoyl-adenylate intermediate.</text>
</comment>
<comment type="catalytic activity">
    <reaction evidence="1">
        <text>(R)-pantoate + beta-alanine + ATP = (R)-pantothenate + AMP + diphosphate + H(+)</text>
        <dbReference type="Rhea" id="RHEA:10912"/>
        <dbReference type="ChEBI" id="CHEBI:15378"/>
        <dbReference type="ChEBI" id="CHEBI:15980"/>
        <dbReference type="ChEBI" id="CHEBI:29032"/>
        <dbReference type="ChEBI" id="CHEBI:30616"/>
        <dbReference type="ChEBI" id="CHEBI:33019"/>
        <dbReference type="ChEBI" id="CHEBI:57966"/>
        <dbReference type="ChEBI" id="CHEBI:456215"/>
        <dbReference type="EC" id="6.3.2.1"/>
    </reaction>
</comment>
<comment type="pathway">
    <text evidence="1">Cofactor biosynthesis; (R)-pantothenate biosynthesis; (R)-pantothenate from (R)-pantoate and beta-alanine: step 1/1.</text>
</comment>
<comment type="subunit">
    <text evidence="1">Homodimer.</text>
</comment>
<comment type="subcellular location">
    <subcellularLocation>
        <location evidence="1">Cytoplasm</location>
    </subcellularLocation>
</comment>
<comment type="miscellaneous">
    <text evidence="1">The reaction proceeds by a bi uni uni bi ping pong mechanism.</text>
</comment>
<comment type="similarity">
    <text evidence="1">Belongs to the pantothenate synthetase family.</text>
</comment>
<reference key="1">
    <citation type="submission" date="2007-11" db="EMBL/GenBank/DDBJ databases">
        <title>Complete sequence of chromosome of Shewanella baltica OS195.</title>
        <authorList>
            <consortium name="US DOE Joint Genome Institute"/>
            <person name="Copeland A."/>
            <person name="Lucas S."/>
            <person name="Lapidus A."/>
            <person name="Barry K."/>
            <person name="Glavina del Rio T."/>
            <person name="Dalin E."/>
            <person name="Tice H."/>
            <person name="Pitluck S."/>
            <person name="Chain P."/>
            <person name="Malfatti S."/>
            <person name="Shin M."/>
            <person name="Vergez L."/>
            <person name="Schmutz J."/>
            <person name="Larimer F."/>
            <person name="Land M."/>
            <person name="Hauser L."/>
            <person name="Kyrpides N."/>
            <person name="Kim E."/>
            <person name="Brettar I."/>
            <person name="Rodrigues J."/>
            <person name="Konstantinidis K."/>
            <person name="Klappenbach J."/>
            <person name="Hofle M."/>
            <person name="Tiedje J."/>
            <person name="Richardson P."/>
        </authorList>
    </citation>
    <scope>NUCLEOTIDE SEQUENCE [LARGE SCALE GENOMIC DNA]</scope>
    <source>
        <strain>OS195</strain>
    </source>
</reference>
<dbReference type="EC" id="6.3.2.1" evidence="1"/>
<dbReference type="EMBL" id="CP000891">
    <property type="protein sequence ID" value="ABX48056.1"/>
    <property type="molecule type" value="Genomic_DNA"/>
</dbReference>
<dbReference type="RefSeq" id="WP_006085990.1">
    <property type="nucleotide sequence ID" value="NC_009997.1"/>
</dbReference>
<dbReference type="SMR" id="A9L2H4"/>
<dbReference type="GeneID" id="11771183"/>
<dbReference type="KEGG" id="sbn:Sbal195_0879"/>
<dbReference type="HOGENOM" id="CLU_047148_0_0_6"/>
<dbReference type="UniPathway" id="UPA00028">
    <property type="reaction ID" value="UER00005"/>
</dbReference>
<dbReference type="Proteomes" id="UP000000770">
    <property type="component" value="Chromosome"/>
</dbReference>
<dbReference type="GO" id="GO:0005829">
    <property type="term" value="C:cytosol"/>
    <property type="evidence" value="ECO:0007669"/>
    <property type="project" value="TreeGrafter"/>
</dbReference>
<dbReference type="GO" id="GO:0005524">
    <property type="term" value="F:ATP binding"/>
    <property type="evidence" value="ECO:0007669"/>
    <property type="project" value="UniProtKB-KW"/>
</dbReference>
<dbReference type="GO" id="GO:0004592">
    <property type="term" value="F:pantoate-beta-alanine ligase activity"/>
    <property type="evidence" value="ECO:0007669"/>
    <property type="project" value="UniProtKB-UniRule"/>
</dbReference>
<dbReference type="GO" id="GO:0015940">
    <property type="term" value="P:pantothenate biosynthetic process"/>
    <property type="evidence" value="ECO:0007669"/>
    <property type="project" value="UniProtKB-UniRule"/>
</dbReference>
<dbReference type="CDD" id="cd00560">
    <property type="entry name" value="PanC"/>
    <property type="match status" value="1"/>
</dbReference>
<dbReference type="FunFam" id="3.40.50.620:FF:000013">
    <property type="entry name" value="Pantothenate synthetase"/>
    <property type="match status" value="1"/>
</dbReference>
<dbReference type="Gene3D" id="3.40.50.620">
    <property type="entry name" value="HUPs"/>
    <property type="match status" value="1"/>
</dbReference>
<dbReference type="Gene3D" id="3.30.1300.10">
    <property type="entry name" value="Pantoate-beta-alanine ligase, C-terminal domain"/>
    <property type="match status" value="1"/>
</dbReference>
<dbReference type="HAMAP" id="MF_00158">
    <property type="entry name" value="PanC"/>
    <property type="match status" value="1"/>
</dbReference>
<dbReference type="InterPro" id="IPR004821">
    <property type="entry name" value="Cyt_trans-like"/>
</dbReference>
<dbReference type="InterPro" id="IPR003721">
    <property type="entry name" value="Pantoate_ligase"/>
</dbReference>
<dbReference type="InterPro" id="IPR042176">
    <property type="entry name" value="Pantoate_ligase_C"/>
</dbReference>
<dbReference type="InterPro" id="IPR014729">
    <property type="entry name" value="Rossmann-like_a/b/a_fold"/>
</dbReference>
<dbReference type="NCBIfam" id="TIGR00125">
    <property type="entry name" value="cyt_tran_rel"/>
    <property type="match status" value="1"/>
</dbReference>
<dbReference type="NCBIfam" id="TIGR00018">
    <property type="entry name" value="panC"/>
    <property type="match status" value="1"/>
</dbReference>
<dbReference type="PANTHER" id="PTHR21299">
    <property type="entry name" value="CYTIDYLATE KINASE/PANTOATE-BETA-ALANINE LIGASE"/>
    <property type="match status" value="1"/>
</dbReference>
<dbReference type="PANTHER" id="PTHR21299:SF1">
    <property type="entry name" value="PANTOATE--BETA-ALANINE LIGASE"/>
    <property type="match status" value="1"/>
</dbReference>
<dbReference type="Pfam" id="PF02569">
    <property type="entry name" value="Pantoate_ligase"/>
    <property type="match status" value="1"/>
</dbReference>
<dbReference type="SUPFAM" id="SSF52374">
    <property type="entry name" value="Nucleotidylyl transferase"/>
    <property type="match status" value="1"/>
</dbReference>
<feature type="chain" id="PRO_1000097110" description="Pantothenate synthetase">
    <location>
        <begin position="1"/>
        <end position="281"/>
    </location>
</feature>
<feature type="active site" description="Proton donor" evidence="1">
    <location>
        <position position="37"/>
    </location>
</feature>
<feature type="binding site" evidence="1">
    <location>
        <begin position="30"/>
        <end position="37"/>
    </location>
    <ligand>
        <name>ATP</name>
        <dbReference type="ChEBI" id="CHEBI:30616"/>
    </ligand>
</feature>
<feature type="binding site" evidence="1">
    <location>
        <position position="61"/>
    </location>
    <ligand>
        <name>(R)-pantoate</name>
        <dbReference type="ChEBI" id="CHEBI:15980"/>
    </ligand>
</feature>
<feature type="binding site" evidence="1">
    <location>
        <position position="61"/>
    </location>
    <ligand>
        <name>beta-alanine</name>
        <dbReference type="ChEBI" id="CHEBI:57966"/>
    </ligand>
</feature>
<feature type="binding site" evidence="1">
    <location>
        <begin position="149"/>
        <end position="152"/>
    </location>
    <ligand>
        <name>ATP</name>
        <dbReference type="ChEBI" id="CHEBI:30616"/>
    </ligand>
</feature>
<feature type="binding site" evidence="1">
    <location>
        <position position="155"/>
    </location>
    <ligand>
        <name>(R)-pantoate</name>
        <dbReference type="ChEBI" id="CHEBI:15980"/>
    </ligand>
</feature>
<feature type="binding site" evidence="1">
    <location>
        <position position="178"/>
    </location>
    <ligand>
        <name>ATP</name>
        <dbReference type="ChEBI" id="CHEBI:30616"/>
    </ligand>
</feature>
<feature type="binding site" evidence="1">
    <location>
        <begin position="186"/>
        <end position="189"/>
    </location>
    <ligand>
        <name>ATP</name>
        <dbReference type="ChEBI" id="CHEBI:30616"/>
    </ligand>
</feature>
<sequence>MITSAHIDDIRTQVRAWRAKGETVAFVPTMGNLHQGHITLVKEAASKCDHVVASIFVNPMQFGQNEDLDAYPRTLAADSEALTAAGAELLFTPTPAVMYPKGLEQQTYVEVPGISNVLCGASRPGHFRGVATIVCKLFNIVQPDVALFGNKDYQQLLVIKTMVEDLSLPIEIIGVDTIREDSGLAMSSRNGYLTAAEKAAAPALKQAIDAMAAGIKQGESFEQMTEQAKACLVAAGFTPDYLEIRHAHTLEQAQNQDHALVILAAAYIGKARLIDNLRFDR</sequence>
<organism>
    <name type="scientific">Shewanella baltica (strain OS195)</name>
    <dbReference type="NCBI Taxonomy" id="399599"/>
    <lineage>
        <taxon>Bacteria</taxon>
        <taxon>Pseudomonadati</taxon>
        <taxon>Pseudomonadota</taxon>
        <taxon>Gammaproteobacteria</taxon>
        <taxon>Alteromonadales</taxon>
        <taxon>Shewanellaceae</taxon>
        <taxon>Shewanella</taxon>
    </lineage>
</organism>
<name>PANC_SHEB9</name>
<accession>A9L2H4</accession>
<gene>
    <name evidence="1" type="primary">panC</name>
    <name type="ordered locus">Sbal195_0879</name>
</gene>
<evidence type="ECO:0000255" key="1">
    <source>
        <dbReference type="HAMAP-Rule" id="MF_00158"/>
    </source>
</evidence>
<protein>
    <recommendedName>
        <fullName evidence="1">Pantothenate synthetase</fullName>
        <shortName evidence="1">PS</shortName>
        <ecNumber evidence="1">6.3.2.1</ecNumber>
    </recommendedName>
    <alternativeName>
        <fullName evidence="1">Pantoate--beta-alanine ligase</fullName>
    </alternativeName>
    <alternativeName>
        <fullName evidence="1">Pantoate-activating enzyme</fullName>
    </alternativeName>
</protein>
<keyword id="KW-0067">ATP-binding</keyword>
<keyword id="KW-0963">Cytoplasm</keyword>
<keyword id="KW-0436">Ligase</keyword>
<keyword id="KW-0547">Nucleotide-binding</keyword>
<keyword id="KW-0566">Pantothenate biosynthesis</keyword>
<proteinExistence type="inferred from homology"/>